<proteinExistence type="inferred from homology"/>
<keyword id="KW-1185">Reference proteome</keyword>
<keyword id="KW-0687">Ribonucleoprotein</keyword>
<keyword id="KW-0689">Ribosomal protein</keyword>
<keyword id="KW-0694">RNA-binding</keyword>
<keyword id="KW-0699">rRNA-binding</keyword>
<keyword id="KW-0820">tRNA-binding</keyword>
<evidence type="ECO:0000255" key="1">
    <source>
        <dbReference type="HAMAP-Rule" id="MF_01315"/>
    </source>
</evidence>
<evidence type="ECO:0000256" key="2">
    <source>
        <dbReference type="SAM" id="MobiDB-lite"/>
    </source>
</evidence>
<evidence type="ECO:0000305" key="3"/>
<gene>
    <name evidence="1" type="primary">rpsM</name>
    <name type="ordered locus">NMB0165</name>
</gene>
<accession>P66386</accession>
<accession>Q9JRI3</accession>
<organism>
    <name type="scientific">Neisseria meningitidis serogroup B (strain ATCC BAA-335 / MC58)</name>
    <dbReference type="NCBI Taxonomy" id="122586"/>
    <lineage>
        <taxon>Bacteria</taxon>
        <taxon>Pseudomonadati</taxon>
        <taxon>Pseudomonadota</taxon>
        <taxon>Betaproteobacteria</taxon>
        <taxon>Neisseriales</taxon>
        <taxon>Neisseriaceae</taxon>
        <taxon>Neisseria</taxon>
    </lineage>
</organism>
<sequence>MARIAGVNIPNNAHIVIGLQAIYGIGATRAKLICEAANIAPDTKAKDLDETQLDALRDQVAKYEVEGDLRREVTMSIKRLMDMGCYRGFRHRRGLPCRGQRTRTNARTRKGPRKAIAGKK</sequence>
<feature type="chain" id="PRO_0000132116" description="Small ribosomal subunit protein uS13">
    <location>
        <begin position="1"/>
        <end position="120"/>
    </location>
</feature>
<feature type="region of interest" description="Disordered" evidence="2">
    <location>
        <begin position="96"/>
        <end position="120"/>
    </location>
</feature>
<protein>
    <recommendedName>
        <fullName evidence="1">Small ribosomal subunit protein uS13</fullName>
    </recommendedName>
    <alternativeName>
        <fullName evidence="3">30S ribosomal protein S13</fullName>
    </alternativeName>
</protein>
<comment type="function">
    <text evidence="1">Located at the top of the head of the 30S subunit, it contacts several helices of the 16S rRNA. In the 70S ribosome it contacts the 23S rRNA (bridge B1a) and protein L5 of the 50S subunit (bridge B1b), connecting the 2 subunits; these bridges are implicated in subunit movement. Contacts the tRNAs in the A and P-sites.</text>
</comment>
<comment type="subunit">
    <text evidence="1">Part of the 30S ribosomal subunit. Forms a loose heterodimer with protein S19. Forms two bridges to the 50S subunit in the 70S ribosome.</text>
</comment>
<comment type="similarity">
    <text evidence="1">Belongs to the universal ribosomal protein uS13 family.</text>
</comment>
<dbReference type="EMBL" id="AE002098">
    <property type="protein sequence ID" value="AAF40622.1"/>
    <property type="molecule type" value="Genomic_DNA"/>
</dbReference>
<dbReference type="PIR" id="E81229">
    <property type="entry name" value="E81229"/>
</dbReference>
<dbReference type="RefSeq" id="NP_273223.1">
    <property type="nucleotide sequence ID" value="NC_003112.2"/>
</dbReference>
<dbReference type="RefSeq" id="WP_002215453.1">
    <property type="nucleotide sequence ID" value="NC_003112.2"/>
</dbReference>
<dbReference type="SMR" id="P66386"/>
<dbReference type="FunCoup" id="P66386">
    <property type="interactions" value="569"/>
</dbReference>
<dbReference type="STRING" id="122586.NMB0165"/>
<dbReference type="PaxDb" id="122586-NMB0165"/>
<dbReference type="GeneID" id="93387240"/>
<dbReference type="KEGG" id="nme:NMB0165"/>
<dbReference type="PATRIC" id="fig|122586.8.peg.206"/>
<dbReference type="HOGENOM" id="CLU_103849_1_2_4"/>
<dbReference type="InParanoid" id="P66386"/>
<dbReference type="OrthoDB" id="9803610at2"/>
<dbReference type="Proteomes" id="UP000000425">
    <property type="component" value="Chromosome"/>
</dbReference>
<dbReference type="GO" id="GO:0005829">
    <property type="term" value="C:cytosol"/>
    <property type="evidence" value="ECO:0000318"/>
    <property type="project" value="GO_Central"/>
</dbReference>
<dbReference type="GO" id="GO:0015935">
    <property type="term" value="C:small ribosomal subunit"/>
    <property type="evidence" value="ECO:0000318"/>
    <property type="project" value="GO_Central"/>
</dbReference>
<dbReference type="GO" id="GO:0019843">
    <property type="term" value="F:rRNA binding"/>
    <property type="evidence" value="ECO:0007669"/>
    <property type="project" value="UniProtKB-UniRule"/>
</dbReference>
<dbReference type="GO" id="GO:0003735">
    <property type="term" value="F:structural constituent of ribosome"/>
    <property type="evidence" value="ECO:0007669"/>
    <property type="project" value="InterPro"/>
</dbReference>
<dbReference type="GO" id="GO:0000049">
    <property type="term" value="F:tRNA binding"/>
    <property type="evidence" value="ECO:0007669"/>
    <property type="project" value="UniProtKB-UniRule"/>
</dbReference>
<dbReference type="GO" id="GO:0006412">
    <property type="term" value="P:translation"/>
    <property type="evidence" value="ECO:0007669"/>
    <property type="project" value="UniProtKB-UniRule"/>
</dbReference>
<dbReference type="FunFam" id="1.10.8.50:FF:000001">
    <property type="entry name" value="30S ribosomal protein S13"/>
    <property type="match status" value="1"/>
</dbReference>
<dbReference type="FunFam" id="4.10.910.10:FF:000001">
    <property type="entry name" value="30S ribosomal protein S13"/>
    <property type="match status" value="1"/>
</dbReference>
<dbReference type="Gene3D" id="1.10.8.50">
    <property type="match status" value="1"/>
</dbReference>
<dbReference type="Gene3D" id="4.10.910.10">
    <property type="entry name" value="30s ribosomal protein s13, domain 2"/>
    <property type="match status" value="1"/>
</dbReference>
<dbReference type="HAMAP" id="MF_01315">
    <property type="entry name" value="Ribosomal_uS13"/>
    <property type="match status" value="1"/>
</dbReference>
<dbReference type="InterPro" id="IPR027437">
    <property type="entry name" value="Rbsml_uS13_C"/>
</dbReference>
<dbReference type="InterPro" id="IPR001892">
    <property type="entry name" value="Ribosomal_uS13"/>
</dbReference>
<dbReference type="InterPro" id="IPR010979">
    <property type="entry name" value="Ribosomal_uS13-like_H2TH"/>
</dbReference>
<dbReference type="InterPro" id="IPR019980">
    <property type="entry name" value="Ribosomal_uS13_bac-type"/>
</dbReference>
<dbReference type="InterPro" id="IPR018269">
    <property type="entry name" value="Ribosomal_uS13_CS"/>
</dbReference>
<dbReference type="NCBIfam" id="TIGR03631">
    <property type="entry name" value="uS13_bact"/>
    <property type="match status" value="1"/>
</dbReference>
<dbReference type="PANTHER" id="PTHR10871">
    <property type="entry name" value="30S RIBOSOMAL PROTEIN S13/40S RIBOSOMAL PROTEIN S18"/>
    <property type="match status" value="1"/>
</dbReference>
<dbReference type="PANTHER" id="PTHR10871:SF1">
    <property type="entry name" value="SMALL RIBOSOMAL SUBUNIT PROTEIN US13M"/>
    <property type="match status" value="1"/>
</dbReference>
<dbReference type="Pfam" id="PF00416">
    <property type="entry name" value="Ribosomal_S13"/>
    <property type="match status" value="1"/>
</dbReference>
<dbReference type="PIRSF" id="PIRSF002134">
    <property type="entry name" value="Ribosomal_S13"/>
    <property type="match status" value="1"/>
</dbReference>
<dbReference type="SUPFAM" id="SSF46946">
    <property type="entry name" value="S13-like H2TH domain"/>
    <property type="match status" value="1"/>
</dbReference>
<dbReference type="PROSITE" id="PS00646">
    <property type="entry name" value="RIBOSOMAL_S13_1"/>
    <property type="match status" value="1"/>
</dbReference>
<dbReference type="PROSITE" id="PS50159">
    <property type="entry name" value="RIBOSOMAL_S13_2"/>
    <property type="match status" value="1"/>
</dbReference>
<reference key="1">
    <citation type="journal article" date="2000" name="Science">
        <title>Complete genome sequence of Neisseria meningitidis serogroup B strain MC58.</title>
        <authorList>
            <person name="Tettelin H."/>
            <person name="Saunders N.J."/>
            <person name="Heidelberg J.F."/>
            <person name="Jeffries A.C."/>
            <person name="Nelson K.E."/>
            <person name="Eisen J.A."/>
            <person name="Ketchum K.A."/>
            <person name="Hood D.W."/>
            <person name="Peden J.F."/>
            <person name="Dodson R.J."/>
            <person name="Nelson W.C."/>
            <person name="Gwinn M.L."/>
            <person name="DeBoy R.T."/>
            <person name="Peterson J.D."/>
            <person name="Hickey E.K."/>
            <person name="Haft D.H."/>
            <person name="Salzberg S.L."/>
            <person name="White O."/>
            <person name="Fleischmann R.D."/>
            <person name="Dougherty B.A."/>
            <person name="Mason T.M."/>
            <person name="Ciecko A."/>
            <person name="Parksey D.S."/>
            <person name="Blair E."/>
            <person name="Cittone H."/>
            <person name="Clark E.B."/>
            <person name="Cotton M.D."/>
            <person name="Utterback T.R."/>
            <person name="Khouri H.M."/>
            <person name="Qin H."/>
            <person name="Vamathevan J.J."/>
            <person name="Gill J."/>
            <person name="Scarlato V."/>
            <person name="Masignani V."/>
            <person name="Pizza M."/>
            <person name="Grandi G."/>
            <person name="Sun L."/>
            <person name="Smith H.O."/>
            <person name="Fraser C.M."/>
            <person name="Moxon E.R."/>
            <person name="Rappuoli R."/>
            <person name="Venter J.C."/>
        </authorList>
    </citation>
    <scope>NUCLEOTIDE SEQUENCE [LARGE SCALE GENOMIC DNA]</scope>
    <source>
        <strain>ATCC BAA-335 / MC58</strain>
    </source>
</reference>
<name>RS13_NEIMB</name>